<proteinExistence type="inferred from homology"/>
<dbReference type="EC" id="2.8.4.3" evidence="1"/>
<dbReference type="EMBL" id="BA000037">
    <property type="protein sequence ID" value="BAC93681.1"/>
    <property type="molecule type" value="Genomic_DNA"/>
</dbReference>
<dbReference type="RefSeq" id="WP_011149716.1">
    <property type="nucleotide sequence ID" value="NC_005139.1"/>
</dbReference>
<dbReference type="SMR" id="Q7MN00"/>
<dbReference type="STRING" id="672.VV93_v1c08540"/>
<dbReference type="KEGG" id="vvy:VV0917"/>
<dbReference type="PATRIC" id="fig|196600.6.peg.922"/>
<dbReference type="eggNOG" id="COG0621">
    <property type="taxonomic scope" value="Bacteria"/>
</dbReference>
<dbReference type="HOGENOM" id="CLU_018697_2_0_6"/>
<dbReference type="Proteomes" id="UP000002675">
    <property type="component" value="Chromosome I"/>
</dbReference>
<dbReference type="GO" id="GO:0005829">
    <property type="term" value="C:cytosol"/>
    <property type="evidence" value="ECO:0007669"/>
    <property type="project" value="TreeGrafter"/>
</dbReference>
<dbReference type="GO" id="GO:0051539">
    <property type="term" value="F:4 iron, 4 sulfur cluster binding"/>
    <property type="evidence" value="ECO:0007669"/>
    <property type="project" value="UniProtKB-UniRule"/>
</dbReference>
<dbReference type="GO" id="GO:0046872">
    <property type="term" value="F:metal ion binding"/>
    <property type="evidence" value="ECO:0007669"/>
    <property type="project" value="UniProtKB-KW"/>
</dbReference>
<dbReference type="GO" id="GO:0035597">
    <property type="term" value="F:N6-isopentenyladenosine methylthiotransferase activity"/>
    <property type="evidence" value="ECO:0007669"/>
    <property type="project" value="TreeGrafter"/>
</dbReference>
<dbReference type="CDD" id="cd01335">
    <property type="entry name" value="Radical_SAM"/>
    <property type="match status" value="1"/>
</dbReference>
<dbReference type="FunFam" id="3.40.50.12160:FF:000001">
    <property type="entry name" value="tRNA-2-methylthio-N(6)-dimethylallyladenosine synthase"/>
    <property type="match status" value="1"/>
</dbReference>
<dbReference type="FunFam" id="3.80.30.20:FF:000001">
    <property type="entry name" value="tRNA-2-methylthio-N(6)-dimethylallyladenosine synthase 2"/>
    <property type="match status" value="1"/>
</dbReference>
<dbReference type="Gene3D" id="3.40.50.12160">
    <property type="entry name" value="Methylthiotransferase, N-terminal domain"/>
    <property type="match status" value="1"/>
</dbReference>
<dbReference type="Gene3D" id="3.80.30.20">
    <property type="entry name" value="tm_1862 like domain"/>
    <property type="match status" value="1"/>
</dbReference>
<dbReference type="HAMAP" id="MF_01864">
    <property type="entry name" value="tRNA_metthiotr_MiaB"/>
    <property type="match status" value="1"/>
</dbReference>
<dbReference type="InterPro" id="IPR006638">
    <property type="entry name" value="Elp3/MiaA/NifB-like_rSAM"/>
</dbReference>
<dbReference type="InterPro" id="IPR005839">
    <property type="entry name" value="Methylthiotransferase"/>
</dbReference>
<dbReference type="InterPro" id="IPR020612">
    <property type="entry name" value="Methylthiotransferase_CS"/>
</dbReference>
<dbReference type="InterPro" id="IPR013848">
    <property type="entry name" value="Methylthiotransferase_N"/>
</dbReference>
<dbReference type="InterPro" id="IPR038135">
    <property type="entry name" value="Methylthiotransferase_N_sf"/>
</dbReference>
<dbReference type="InterPro" id="IPR006463">
    <property type="entry name" value="MiaB_methiolase"/>
</dbReference>
<dbReference type="InterPro" id="IPR007197">
    <property type="entry name" value="rSAM"/>
</dbReference>
<dbReference type="InterPro" id="IPR023404">
    <property type="entry name" value="rSAM_horseshoe"/>
</dbReference>
<dbReference type="InterPro" id="IPR002792">
    <property type="entry name" value="TRAM_dom"/>
</dbReference>
<dbReference type="NCBIfam" id="TIGR01574">
    <property type="entry name" value="miaB-methiolase"/>
    <property type="match status" value="1"/>
</dbReference>
<dbReference type="NCBIfam" id="TIGR00089">
    <property type="entry name" value="MiaB/RimO family radical SAM methylthiotransferase"/>
    <property type="match status" value="1"/>
</dbReference>
<dbReference type="PANTHER" id="PTHR43020">
    <property type="entry name" value="CDK5 REGULATORY SUBUNIT-ASSOCIATED PROTEIN 1"/>
    <property type="match status" value="1"/>
</dbReference>
<dbReference type="PANTHER" id="PTHR43020:SF2">
    <property type="entry name" value="MITOCHONDRIAL TRNA METHYLTHIOTRANSFERASE CDK5RAP1"/>
    <property type="match status" value="1"/>
</dbReference>
<dbReference type="Pfam" id="PF04055">
    <property type="entry name" value="Radical_SAM"/>
    <property type="match status" value="1"/>
</dbReference>
<dbReference type="Pfam" id="PF01938">
    <property type="entry name" value="TRAM"/>
    <property type="match status" value="1"/>
</dbReference>
<dbReference type="Pfam" id="PF00919">
    <property type="entry name" value="UPF0004"/>
    <property type="match status" value="1"/>
</dbReference>
<dbReference type="SFLD" id="SFLDF00273">
    <property type="entry name" value="(dimethylallyl)adenosine_tRNA"/>
    <property type="match status" value="1"/>
</dbReference>
<dbReference type="SFLD" id="SFLDG01082">
    <property type="entry name" value="B12-binding_domain_containing"/>
    <property type="match status" value="1"/>
</dbReference>
<dbReference type="SFLD" id="SFLDS00029">
    <property type="entry name" value="Radical_SAM"/>
    <property type="match status" value="1"/>
</dbReference>
<dbReference type="SMART" id="SM00729">
    <property type="entry name" value="Elp3"/>
    <property type="match status" value="1"/>
</dbReference>
<dbReference type="SUPFAM" id="SSF102114">
    <property type="entry name" value="Radical SAM enzymes"/>
    <property type="match status" value="1"/>
</dbReference>
<dbReference type="PROSITE" id="PS51449">
    <property type="entry name" value="MTTASE_N"/>
    <property type="match status" value="1"/>
</dbReference>
<dbReference type="PROSITE" id="PS01278">
    <property type="entry name" value="MTTASE_RADICAL"/>
    <property type="match status" value="1"/>
</dbReference>
<dbReference type="PROSITE" id="PS51918">
    <property type="entry name" value="RADICAL_SAM"/>
    <property type="match status" value="1"/>
</dbReference>
<dbReference type="PROSITE" id="PS50926">
    <property type="entry name" value="TRAM"/>
    <property type="match status" value="1"/>
</dbReference>
<gene>
    <name evidence="1" type="primary">miaB</name>
    <name type="ordered locus">VV0917</name>
</gene>
<reference key="1">
    <citation type="journal article" date="2003" name="Genome Res.">
        <title>Comparative genome analysis of Vibrio vulnificus, a marine pathogen.</title>
        <authorList>
            <person name="Chen C.-Y."/>
            <person name="Wu K.-M."/>
            <person name="Chang Y.-C."/>
            <person name="Chang C.-H."/>
            <person name="Tsai H.-C."/>
            <person name="Liao T.-L."/>
            <person name="Liu Y.-M."/>
            <person name="Chen H.-J."/>
            <person name="Shen A.B.-T."/>
            <person name="Li J.-C."/>
            <person name="Su T.-L."/>
            <person name="Shao C.-P."/>
            <person name="Lee C.-T."/>
            <person name="Hor L.-I."/>
            <person name="Tsai S.-F."/>
        </authorList>
    </citation>
    <scope>NUCLEOTIDE SEQUENCE [LARGE SCALE GENOMIC DNA]</scope>
    <source>
        <strain>YJ016</strain>
    </source>
</reference>
<keyword id="KW-0004">4Fe-4S</keyword>
<keyword id="KW-0963">Cytoplasm</keyword>
<keyword id="KW-0408">Iron</keyword>
<keyword id="KW-0411">Iron-sulfur</keyword>
<keyword id="KW-0479">Metal-binding</keyword>
<keyword id="KW-0949">S-adenosyl-L-methionine</keyword>
<keyword id="KW-0808">Transferase</keyword>
<keyword id="KW-0819">tRNA processing</keyword>
<organism>
    <name type="scientific">Vibrio vulnificus (strain YJ016)</name>
    <dbReference type="NCBI Taxonomy" id="196600"/>
    <lineage>
        <taxon>Bacteria</taxon>
        <taxon>Pseudomonadati</taxon>
        <taxon>Pseudomonadota</taxon>
        <taxon>Gammaproteobacteria</taxon>
        <taxon>Vibrionales</taxon>
        <taxon>Vibrionaceae</taxon>
        <taxon>Vibrio</taxon>
    </lineage>
</organism>
<comment type="function">
    <text evidence="1">Catalyzes the methylthiolation of N6-(dimethylallyl)adenosine (i(6)A), leading to the formation of 2-methylthio-N6-(dimethylallyl)adenosine (ms(2)i(6)A) at position 37 in tRNAs that read codons beginning with uridine.</text>
</comment>
<comment type="catalytic activity">
    <reaction evidence="1">
        <text>N(6)-dimethylallyladenosine(37) in tRNA + (sulfur carrier)-SH + AH2 + 2 S-adenosyl-L-methionine = 2-methylsulfanyl-N(6)-dimethylallyladenosine(37) in tRNA + (sulfur carrier)-H + 5'-deoxyadenosine + L-methionine + A + S-adenosyl-L-homocysteine + 2 H(+)</text>
        <dbReference type="Rhea" id="RHEA:37067"/>
        <dbReference type="Rhea" id="RHEA-COMP:10375"/>
        <dbReference type="Rhea" id="RHEA-COMP:10376"/>
        <dbReference type="Rhea" id="RHEA-COMP:14737"/>
        <dbReference type="Rhea" id="RHEA-COMP:14739"/>
        <dbReference type="ChEBI" id="CHEBI:13193"/>
        <dbReference type="ChEBI" id="CHEBI:15378"/>
        <dbReference type="ChEBI" id="CHEBI:17319"/>
        <dbReference type="ChEBI" id="CHEBI:17499"/>
        <dbReference type="ChEBI" id="CHEBI:29917"/>
        <dbReference type="ChEBI" id="CHEBI:57844"/>
        <dbReference type="ChEBI" id="CHEBI:57856"/>
        <dbReference type="ChEBI" id="CHEBI:59789"/>
        <dbReference type="ChEBI" id="CHEBI:64428"/>
        <dbReference type="ChEBI" id="CHEBI:74415"/>
        <dbReference type="ChEBI" id="CHEBI:74417"/>
        <dbReference type="EC" id="2.8.4.3"/>
    </reaction>
</comment>
<comment type="cofactor">
    <cofactor evidence="1">
        <name>[4Fe-4S] cluster</name>
        <dbReference type="ChEBI" id="CHEBI:49883"/>
    </cofactor>
    <text evidence="1">Binds 2 [4Fe-4S] clusters. One cluster is coordinated with 3 cysteines and an exchangeable S-adenosyl-L-methionine.</text>
</comment>
<comment type="subunit">
    <text evidence="1">Monomer.</text>
</comment>
<comment type="subcellular location">
    <subcellularLocation>
        <location evidence="1">Cytoplasm</location>
    </subcellularLocation>
</comment>
<comment type="similarity">
    <text evidence="1">Belongs to the methylthiotransferase family. MiaB subfamily.</text>
</comment>
<accession>Q7MN00</accession>
<protein>
    <recommendedName>
        <fullName evidence="1">tRNA-2-methylthio-N(6)-dimethylallyladenosine synthase</fullName>
        <ecNumber evidence="1">2.8.4.3</ecNumber>
    </recommendedName>
    <alternativeName>
        <fullName evidence="1">(Dimethylallyl)adenosine tRNA methylthiotransferase MiaB</fullName>
    </alternativeName>
    <alternativeName>
        <fullName evidence="1">tRNA-i(6)A37 methylthiotransferase</fullName>
    </alternativeName>
</protein>
<name>MIAB_VIBVY</name>
<evidence type="ECO:0000255" key="1">
    <source>
        <dbReference type="HAMAP-Rule" id="MF_01864"/>
    </source>
</evidence>
<evidence type="ECO:0000255" key="2">
    <source>
        <dbReference type="PROSITE-ProRule" id="PRU01266"/>
    </source>
</evidence>
<feature type="chain" id="PRO_0000374636" description="tRNA-2-methylthio-N(6)-dimethylallyladenosine synthase">
    <location>
        <begin position="1"/>
        <end position="474"/>
    </location>
</feature>
<feature type="domain" description="MTTase N-terminal" evidence="1">
    <location>
        <begin position="3"/>
        <end position="120"/>
    </location>
</feature>
<feature type="domain" description="Radical SAM core" evidence="2">
    <location>
        <begin position="143"/>
        <end position="375"/>
    </location>
</feature>
<feature type="domain" description="TRAM" evidence="1">
    <location>
        <begin position="378"/>
        <end position="441"/>
    </location>
</feature>
<feature type="binding site" evidence="1">
    <location>
        <position position="12"/>
    </location>
    <ligand>
        <name>[4Fe-4S] cluster</name>
        <dbReference type="ChEBI" id="CHEBI:49883"/>
        <label>1</label>
    </ligand>
</feature>
<feature type="binding site" evidence="1">
    <location>
        <position position="49"/>
    </location>
    <ligand>
        <name>[4Fe-4S] cluster</name>
        <dbReference type="ChEBI" id="CHEBI:49883"/>
        <label>1</label>
    </ligand>
</feature>
<feature type="binding site" evidence="1">
    <location>
        <position position="83"/>
    </location>
    <ligand>
        <name>[4Fe-4S] cluster</name>
        <dbReference type="ChEBI" id="CHEBI:49883"/>
        <label>1</label>
    </ligand>
</feature>
<feature type="binding site" evidence="1">
    <location>
        <position position="157"/>
    </location>
    <ligand>
        <name>[4Fe-4S] cluster</name>
        <dbReference type="ChEBI" id="CHEBI:49883"/>
        <label>2</label>
        <note>4Fe-4S-S-AdoMet</note>
    </ligand>
</feature>
<feature type="binding site" evidence="1">
    <location>
        <position position="161"/>
    </location>
    <ligand>
        <name>[4Fe-4S] cluster</name>
        <dbReference type="ChEBI" id="CHEBI:49883"/>
        <label>2</label>
        <note>4Fe-4S-S-AdoMet</note>
    </ligand>
</feature>
<feature type="binding site" evidence="1">
    <location>
        <position position="164"/>
    </location>
    <ligand>
        <name>[4Fe-4S] cluster</name>
        <dbReference type="ChEBI" id="CHEBI:49883"/>
        <label>2</label>
        <note>4Fe-4S-S-AdoMet</note>
    </ligand>
</feature>
<sequence>MSKKLLIKTWGCQMNEYDSSKMADLLNAANGYELTEEPEEADVLLLNTCSIREKAQEKVFHQLGRWKTLKDKKPGVVIGVGGCVATQEGDHIRERAPFVDVIFGPQTLHRLPEMIKQSQSEDAPVMDISFPEIEKFDSLPEPRAEGATAFVSIMEGCSKYCTYCVVPYTRGEEVSRPMDDVLYEIAQLAEQGVREVNLLGQNVNAYRGPMHDGEICSFAELLRLVASIDGIDRIRFTTSHPLEFTDDIIAVYEDTPELVSFLHLPVQSGSDRILTMMKRPHTGIEYKSIIRKLRKARPDIQISSDFIVGFPGETDKDFQDTMKLIKDVDFDMSFSFIFSPRPGTPAADYPCDLSEETKKERLYELQQQINAQAMRYSRLMLGTEQRVLVEGPSKKNLMELRARTENNRVVNFEGSADLIGQFVDVKITDVFANSLRGEIVRTEKDMDLRSVISPTQMMAKTRREDELGVATFTP</sequence>